<gene>
    <name type="primary">Nf2</name>
    <name type="synonym">Nf-2</name>
</gene>
<accession>P46662</accession>
<accession>Q8BR03</accession>
<name>MERL_MOUSE</name>
<keyword id="KW-0002">3D-structure</keyword>
<keyword id="KW-0025">Alternative splicing</keyword>
<keyword id="KW-1003">Cell membrane</keyword>
<keyword id="KW-0966">Cell projection</keyword>
<keyword id="KW-0963">Cytoplasm</keyword>
<keyword id="KW-0206">Cytoskeleton</keyword>
<keyword id="KW-0472">Membrane</keyword>
<keyword id="KW-0539">Nucleus</keyword>
<keyword id="KW-0597">Phosphoprotein</keyword>
<keyword id="KW-1185">Reference proteome</keyword>
<keyword id="KW-0043">Tumor suppressor</keyword>
<keyword id="KW-0832">Ubl conjugation</keyword>
<organism>
    <name type="scientific">Mus musculus</name>
    <name type="common">Mouse</name>
    <dbReference type="NCBI Taxonomy" id="10090"/>
    <lineage>
        <taxon>Eukaryota</taxon>
        <taxon>Metazoa</taxon>
        <taxon>Chordata</taxon>
        <taxon>Craniata</taxon>
        <taxon>Vertebrata</taxon>
        <taxon>Euteleostomi</taxon>
        <taxon>Mammalia</taxon>
        <taxon>Eutheria</taxon>
        <taxon>Euarchontoglires</taxon>
        <taxon>Glires</taxon>
        <taxon>Rodentia</taxon>
        <taxon>Myomorpha</taxon>
        <taxon>Muroidea</taxon>
        <taxon>Muridae</taxon>
        <taxon>Murinae</taxon>
        <taxon>Mus</taxon>
        <taxon>Mus</taxon>
    </lineage>
</organism>
<comment type="function">
    <text evidence="2 6">Probable regulator of the Hippo/SWH (Sav/Wts/Hpo) signaling pathway, a signaling pathway that plays a pivotal role in tumor suppression by restricting proliferation and promoting apoptosis. Along with WWC1 can synergistically induce the phosphorylation of LATS1 and LATS2 and can probably function in the regulation of the Hippo/SWH (Sav/Wts/Hpo) signaling pathway. May act as a membrane stabilizing protein. May inhibit PI3 kinase by binding to AGAP2 and impairing its stimulating activity. Suppresses cell proliferation and tumorigenesis by inhibiting the CUL4A-RBX1-DDB1-VprBP/DCAF1 E3 ubiquitin-protein ligase complex (By similarity). Plays a role in lens development and is required for complete fiber cell terminal differentiation, maintenance of cell polarity and separation of the lens vesicle from the corneal epithelium.</text>
</comment>
<comment type="subunit">
    <text evidence="2 5">Interacts with NHERF1, HGS and AGAP2. Interacts with SGSM3. Interacts (via FERM domain) with MPP1 (By similarity). Interacts with LAYN (PubMed:15913605). Interacts with WWC1. Interacts with the CUL4A-RBX1-DDB1-VprBP/DCAF1 E3 ubiquitin-protein ligase complex. The unphosphorylated form interacts (via FERM domain) with VPRBP/DCAF1. Interacts (via FERM domain) with NOP53; the interaction is direct (By similarity). Interacts with SCHIP1; the interaction is direct (By similarity).</text>
</comment>
<comment type="interaction">
    <interactant intactId="EBI-644586">
        <id>P46662</id>
    </interactant>
    <interactant intactId="EBI-2511319">
        <id>Q4VCS5</id>
        <label>AMOT</label>
    </interactant>
    <organismsDiffer>true</organismsDiffer>
    <experiments>2</experiments>
</comment>
<comment type="interaction">
    <interactant intactId="EBI-644586">
        <id>P46662</id>
    </interactant>
    <interactant intactId="EBI-444209">
        <id>O95835</id>
        <label>LATS1</label>
    </interactant>
    <organismsDiffer>true</organismsDiffer>
    <experiments>5</experiments>
</comment>
<comment type="subcellular location">
    <subcellularLocation>
        <location evidence="1">Cell membrane</location>
        <topology evidence="1">Peripheral membrane protein</topology>
        <orientation evidence="1">Cytoplasmic side</orientation>
    </subcellularLocation>
    <subcellularLocation>
        <location evidence="1">Cell projection</location>
    </subcellularLocation>
    <subcellularLocation>
        <location evidence="1">Cytoplasm</location>
        <location evidence="1">Cytoskeleton</location>
    </subcellularLocation>
    <subcellularLocation>
        <location evidence="1">Nucleus</location>
    </subcellularLocation>
    <text evidence="1">Colocalizes with MPP1 in non-myelin-forming Schwann cells. Binds with DCAF1 in the nucleus. The intramolecular association of the FERM domain with the C-terminal tail promotes nuclear accumulation. The unphosphorylated form accumulates predominantly in the nucleus while the phosphorylated form is largely confined to the non-nuclear fractions (By similarity).</text>
</comment>
<comment type="alternative products">
    <event type="alternative splicing"/>
    <isoform>
        <id>P46662-1</id>
        <name>1</name>
        <sequence type="displayed"/>
    </isoform>
    <isoform>
        <id>P46662-2</id>
        <name>2</name>
        <sequence type="described" ref="VSP_000493"/>
    </isoform>
    <text>Additional isoforms seem to exist.</text>
</comment>
<comment type="PTM">
    <text evidence="2">Phosphorylation of Ser-518 inhibits nuclear localization by disrupting the intramolecular association of the FERM domain with the C-terminal tail. The dephosphorylation of Ser-518 favors the interaction with NOP53.</text>
</comment>
<comment type="PTM">
    <text evidence="1">Ubiquitinated by the CUL4A-RBX1-DDB1-DCAF1/VprBP E3 ubiquitin-protein ligase complex for ubiquitination and subsequent proteasome-dependent degradation.</text>
</comment>
<comment type="disruption phenotype">
    <text evidence="6">Mice are born with abnormally small lenses with serious structural defects. Failure of lens vesicle separation and the resulting changes in cell organization causes lenses to herniate, leading to expulsion of lens fiber cells through a perforation in the cornea. Developing lenses show loss of cell apical-basal polarity, failure of the lens vesicle to separate from the surface ectoderm, failure to properly exit the cell cycle during fiber cell differentiation and incomplete terminal differentiation of fiber cells.</text>
</comment>
<feature type="chain" id="PRO_0000219413" description="Merlin">
    <location>
        <begin position="1"/>
        <end position="596"/>
    </location>
</feature>
<feature type="domain" description="FERM" evidence="3">
    <location>
        <begin position="22"/>
        <end position="311"/>
    </location>
</feature>
<feature type="region of interest" description="Disordered" evidence="4">
    <location>
        <begin position="560"/>
        <end position="580"/>
    </location>
</feature>
<feature type="modified residue" description="Phosphoserine" evidence="2">
    <location>
        <position position="13"/>
    </location>
</feature>
<feature type="modified residue" description="Phosphoserine; by PAK" evidence="2">
    <location>
        <position position="518"/>
    </location>
</feature>
<feature type="splice variant" id="VSP_000493" description="In isoform 2." evidence="7">
    <original>LTLQSAKSRVAFFEEL</original>
    <variation>PQAQGRRPICI</variation>
    <location>
        <begin position="581"/>
        <end position="596"/>
    </location>
</feature>
<feature type="sequence conflict" description="In Ref. 2; AAA39808." evidence="8" ref="2">
    <original>I</original>
    <variation>T</variation>
    <location>
        <position position="475"/>
    </location>
</feature>
<feature type="sequence conflict" description="In Ref. 1; AAA39807/AAA63648." evidence="8" ref="1">
    <original>R</original>
    <variation>A</variation>
    <location>
        <position position="554"/>
    </location>
</feature>
<feature type="sequence conflict" description="In Ref. 2; AAA39808." evidence="8" ref="2">
    <original>G</original>
    <variation>A</variation>
    <location>
        <position position="570"/>
    </location>
</feature>
<feature type="strand" evidence="10">
    <location>
        <begin position="25"/>
        <end position="27"/>
    </location>
</feature>
<feature type="strand" evidence="10">
    <location>
        <begin position="32"/>
        <end position="34"/>
    </location>
</feature>
<feature type="helix" evidence="10">
    <location>
        <begin position="43"/>
        <end position="54"/>
    </location>
</feature>
<feature type="helix" evidence="11">
    <location>
        <begin position="59"/>
        <end position="61"/>
    </location>
</feature>
<feature type="strand" evidence="10">
    <location>
        <begin position="62"/>
        <end position="68"/>
    </location>
</feature>
<feature type="strand" evidence="10">
    <location>
        <begin position="71"/>
        <end position="74"/>
    </location>
</feature>
<feature type="strand" evidence="10">
    <location>
        <begin position="77"/>
        <end position="80"/>
    </location>
</feature>
<feature type="helix" evidence="10">
    <location>
        <begin position="81"/>
        <end position="83"/>
    </location>
</feature>
<feature type="strand" evidence="10">
    <location>
        <begin position="84"/>
        <end position="86"/>
    </location>
</feature>
<feature type="strand" evidence="10">
    <location>
        <begin position="89"/>
        <end position="91"/>
    </location>
</feature>
<feature type="strand" evidence="10">
    <location>
        <begin position="93"/>
        <end position="100"/>
    </location>
</feature>
<feature type="helix" evidence="10">
    <location>
        <begin position="105"/>
        <end position="108"/>
    </location>
</feature>
<feature type="helix" evidence="10">
    <location>
        <begin position="112"/>
        <end position="127"/>
    </location>
</feature>
<feature type="helix" evidence="10">
    <location>
        <begin position="135"/>
        <end position="150"/>
    </location>
</feature>
<feature type="turn" evidence="10">
    <location>
        <begin position="155"/>
        <end position="157"/>
    </location>
</feature>
<feature type="turn" evidence="10">
    <location>
        <begin position="160"/>
        <end position="165"/>
    </location>
</feature>
<feature type="helix" evidence="10">
    <location>
        <begin position="171"/>
        <end position="175"/>
    </location>
</feature>
<feature type="helix" evidence="10">
    <location>
        <begin position="181"/>
        <end position="193"/>
    </location>
</feature>
<feature type="turn" evidence="10">
    <location>
        <begin position="194"/>
        <end position="197"/>
    </location>
</feature>
<feature type="helix" evidence="10">
    <location>
        <begin position="200"/>
        <end position="211"/>
    </location>
</feature>
<feature type="turn" evidence="10">
    <location>
        <begin position="215"/>
        <end position="218"/>
    </location>
</feature>
<feature type="strand" evidence="10">
    <location>
        <begin position="220"/>
        <end position="226"/>
    </location>
</feature>
<feature type="strand" evidence="10">
    <location>
        <begin position="231"/>
        <end position="237"/>
    </location>
</feature>
<feature type="strand" evidence="10">
    <location>
        <begin position="240"/>
        <end position="244"/>
    </location>
</feature>
<feature type="strand" evidence="10">
    <location>
        <begin position="249"/>
        <end position="251"/>
    </location>
</feature>
<feature type="strand" evidence="10">
    <location>
        <begin position="253"/>
        <end position="257"/>
    </location>
</feature>
<feature type="helix" evidence="10">
    <location>
        <begin position="258"/>
        <end position="260"/>
    </location>
</feature>
<feature type="strand" evidence="10">
    <location>
        <begin position="261"/>
        <end position="267"/>
    </location>
</feature>
<feature type="strand" evidence="10">
    <location>
        <begin position="270"/>
        <end position="277"/>
    </location>
</feature>
<feature type="turn" evidence="9">
    <location>
        <begin position="278"/>
        <end position="280"/>
    </location>
</feature>
<feature type="strand" evidence="10">
    <location>
        <begin position="283"/>
        <end position="286"/>
    </location>
</feature>
<feature type="helix" evidence="10">
    <location>
        <begin position="290"/>
        <end position="310"/>
    </location>
</feature>
<feature type="helix" evidence="9">
    <location>
        <begin position="316"/>
        <end position="337"/>
    </location>
</feature>
<dbReference type="EMBL" id="X74671">
    <property type="protein sequence ID" value="CAA52737.1"/>
    <property type="molecule type" value="mRNA"/>
</dbReference>
<dbReference type="EMBL" id="L27105">
    <property type="protein sequence ID" value="AAA39807.1"/>
    <property type="molecule type" value="mRNA"/>
</dbReference>
<dbReference type="EMBL" id="L27090">
    <property type="protein sequence ID" value="AAA63648.1"/>
    <property type="molecule type" value="mRNA"/>
</dbReference>
<dbReference type="EMBL" id="L28176">
    <property type="protein sequence ID" value="AAA39808.1"/>
    <property type="molecule type" value="mRNA"/>
</dbReference>
<dbReference type="EMBL" id="AK045998">
    <property type="protein sequence ID" value="BAC32567.1"/>
    <property type="molecule type" value="mRNA"/>
</dbReference>
<dbReference type="EMBL" id="X75759">
    <property type="protein sequence ID" value="CAA53386.1"/>
    <property type="molecule type" value="mRNA"/>
</dbReference>
<dbReference type="CCDS" id="CCDS24391.1">
    <molecule id="P46662-1"/>
</dbReference>
<dbReference type="CCDS" id="CCDS56757.1">
    <molecule id="P46662-2"/>
</dbReference>
<dbReference type="PIR" id="I48683">
    <property type="entry name" value="I48683"/>
</dbReference>
<dbReference type="PIR" id="I54368">
    <property type="entry name" value="I54368"/>
</dbReference>
<dbReference type="PIR" id="I68664">
    <property type="entry name" value="I68664"/>
</dbReference>
<dbReference type="RefSeq" id="NP_001239179.1">
    <molecule id="P46662-2"/>
    <property type="nucleotide sequence ID" value="NM_001252250.1"/>
</dbReference>
<dbReference type="RefSeq" id="NP_001239180.1">
    <molecule id="P46662-2"/>
    <property type="nucleotide sequence ID" value="NM_001252251.1"/>
</dbReference>
<dbReference type="RefSeq" id="NP_001239181.1">
    <property type="nucleotide sequence ID" value="NM_001252252.1"/>
</dbReference>
<dbReference type="RefSeq" id="NP_001239182.1">
    <property type="nucleotide sequence ID" value="NM_001252253.1"/>
</dbReference>
<dbReference type="RefSeq" id="NP_035028.2">
    <molecule id="P46662-1"/>
    <property type="nucleotide sequence ID" value="NM_010898.4"/>
</dbReference>
<dbReference type="RefSeq" id="XP_006514633.1">
    <molecule id="P46662-2"/>
    <property type="nucleotide sequence ID" value="XM_006514570.2"/>
</dbReference>
<dbReference type="RefSeq" id="XP_011241971.1">
    <molecule id="P46662-2"/>
    <property type="nucleotide sequence ID" value="XM_011243669.3"/>
</dbReference>
<dbReference type="PDB" id="1ISN">
    <property type="method" value="X-ray"/>
    <property type="resolution" value="2.90 A"/>
    <property type="chains" value="A=18-340"/>
</dbReference>
<dbReference type="PDB" id="3WA0">
    <property type="method" value="X-ray"/>
    <property type="resolution" value="2.31 A"/>
    <property type="chains" value="A/B/C/D/E/F=19-314"/>
</dbReference>
<dbReference type="PDB" id="4P7I">
    <property type="method" value="X-ray"/>
    <property type="resolution" value="2.60 A"/>
    <property type="chains" value="A/B=1-313"/>
</dbReference>
<dbReference type="PDB" id="4ZRK">
    <property type="method" value="X-ray"/>
    <property type="resolution" value="2.32 A"/>
    <property type="chains" value="A/B/C/D=1-320"/>
</dbReference>
<dbReference type="PDBsum" id="1ISN"/>
<dbReference type="PDBsum" id="3WA0"/>
<dbReference type="PDBsum" id="4P7I"/>
<dbReference type="PDBsum" id="4ZRK"/>
<dbReference type="SMR" id="P46662"/>
<dbReference type="BioGRID" id="201737">
    <property type="interactions" value="16"/>
</dbReference>
<dbReference type="FunCoup" id="P46662">
    <property type="interactions" value="1639"/>
</dbReference>
<dbReference type="IntAct" id="P46662">
    <property type="interactions" value="10"/>
</dbReference>
<dbReference type="MINT" id="P46662"/>
<dbReference type="STRING" id="10090.ENSMUSP00000105536"/>
<dbReference type="iPTMnet" id="P46662"/>
<dbReference type="PhosphoSitePlus" id="P46662"/>
<dbReference type="jPOST" id="P46662"/>
<dbReference type="PaxDb" id="10090-ENSMUSP00000105536"/>
<dbReference type="ProteomicsDB" id="295856">
    <molecule id="P46662-1"/>
</dbReference>
<dbReference type="ProteomicsDB" id="295857">
    <molecule id="P46662-2"/>
</dbReference>
<dbReference type="Pumba" id="P46662"/>
<dbReference type="Antibodypedia" id="319">
    <property type="antibodies" value="678 antibodies from 44 providers"/>
</dbReference>
<dbReference type="DNASU" id="18016"/>
<dbReference type="Ensembl" id="ENSMUST00000053079.13">
    <molecule id="P46662-2"/>
    <property type="protein sequence ID" value="ENSMUSP00000055033.7"/>
    <property type="gene ID" value="ENSMUSG00000009073.17"/>
</dbReference>
<dbReference type="Ensembl" id="ENSMUST00000056290.13">
    <molecule id="P46662-2"/>
    <property type="protein sequence ID" value="ENSMUSP00000055061.7"/>
    <property type="gene ID" value="ENSMUSG00000009073.17"/>
</dbReference>
<dbReference type="Ensembl" id="ENSMUST00000109910.9">
    <molecule id="P46662-1"/>
    <property type="protein sequence ID" value="ENSMUSP00000105536.3"/>
    <property type="gene ID" value="ENSMUSG00000009073.17"/>
</dbReference>
<dbReference type="GeneID" id="18016"/>
<dbReference type="KEGG" id="mmu:18016"/>
<dbReference type="UCSC" id="uc007hvf.2">
    <molecule id="P46662-1"/>
    <property type="organism name" value="mouse"/>
</dbReference>
<dbReference type="UCSC" id="uc007hvg.2">
    <molecule id="P46662-2"/>
    <property type="organism name" value="mouse"/>
</dbReference>
<dbReference type="AGR" id="MGI:97307"/>
<dbReference type="CTD" id="4771"/>
<dbReference type="MGI" id="MGI:97307">
    <property type="gene designation" value="Nf2"/>
</dbReference>
<dbReference type="VEuPathDB" id="HostDB:ENSMUSG00000009073"/>
<dbReference type="eggNOG" id="KOG3529">
    <property type="taxonomic scope" value="Eukaryota"/>
</dbReference>
<dbReference type="GeneTree" id="ENSGT01020000230354"/>
<dbReference type="HOGENOM" id="CLU_003623_6_1_1"/>
<dbReference type="InParanoid" id="P46662"/>
<dbReference type="OMA" id="PGMLANE"/>
<dbReference type="OrthoDB" id="6018897at2759"/>
<dbReference type="PhylomeDB" id="P46662"/>
<dbReference type="TreeFam" id="TF313935"/>
<dbReference type="Reactome" id="R-MMU-2029482">
    <property type="pathway name" value="Regulation of actin dynamics for phagocytic cup formation"/>
</dbReference>
<dbReference type="Reactome" id="R-MMU-5627123">
    <property type="pathway name" value="RHO GTPases activate PAKs"/>
</dbReference>
<dbReference type="BioGRID-ORCS" id="18016">
    <property type="hits" value="20 hits in 84 CRISPR screens"/>
</dbReference>
<dbReference type="ChiTaRS" id="Nf2">
    <property type="organism name" value="mouse"/>
</dbReference>
<dbReference type="EvolutionaryTrace" id="P46662"/>
<dbReference type="PRO" id="PR:P46662"/>
<dbReference type="Proteomes" id="UP000000589">
    <property type="component" value="Chromosome 11"/>
</dbReference>
<dbReference type="RNAct" id="P46662">
    <property type="molecule type" value="protein"/>
</dbReference>
<dbReference type="Bgee" id="ENSMUSG00000009073">
    <property type="expression patterns" value="Expressed in gastrula and 286 other cell types or tissues"/>
</dbReference>
<dbReference type="ExpressionAtlas" id="P46662">
    <property type="expression patterns" value="baseline and differential"/>
</dbReference>
<dbReference type="GO" id="GO:0005912">
    <property type="term" value="C:adherens junction"/>
    <property type="evidence" value="ECO:0000315"/>
    <property type="project" value="MGI"/>
</dbReference>
<dbReference type="GO" id="GO:0045177">
    <property type="term" value="C:apical part of cell"/>
    <property type="evidence" value="ECO:0000314"/>
    <property type="project" value="MGI"/>
</dbReference>
<dbReference type="GO" id="GO:0044297">
    <property type="term" value="C:cell body"/>
    <property type="evidence" value="ECO:0000314"/>
    <property type="project" value="MGI"/>
</dbReference>
<dbReference type="GO" id="GO:0032154">
    <property type="term" value="C:cleavage furrow"/>
    <property type="evidence" value="ECO:0000314"/>
    <property type="project" value="MGI"/>
</dbReference>
<dbReference type="GO" id="GO:0030864">
    <property type="term" value="C:cortical actin cytoskeleton"/>
    <property type="evidence" value="ECO:0000314"/>
    <property type="project" value="MGI"/>
</dbReference>
<dbReference type="GO" id="GO:0005737">
    <property type="term" value="C:cytoplasm"/>
    <property type="evidence" value="ECO:0000314"/>
    <property type="project" value="MGI"/>
</dbReference>
<dbReference type="GO" id="GO:0005856">
    <property type="term" value="C:cytoskeleton"/>
    <property type="evidence" value="ECO:0000314"/>
    <property type="project" value="MGI"/>
</dbReference>
<dbReference type="GO" id="GO:0005829">
    <property type="term" value="C:cytosol"/>
    <property type="evidence" value="ECO:0007669"/>
    <property type="project" value="Ensembl"/>
</dbReference>
<dbReference type="GO" id="GO:0005769">
    <property type="term" value="C:early endosome"/>
    <property type="evidence" value="ECO:0007669"/>
    <property type="project" value="Ensembl"/>
</dbReference>
<dbReference type="GO" id="GO:0030175">
    <property type="term" value="C:filopodium"/>
    <property type="evidence" value="ECO:0000314"/>
    <property type="project" value="MGI"/>
</dbReference>
<dbReference type="GO" id="GO:0030027">
    <property type="term" value="C:lamellipodium"/>
    <property type="evidence" value="ECO:0000314"/>
    <property type="project" value="MGI"/>
</dbReference>
<dbReference type="GO" id="GO:0043005">
    <property type="term" value="C:neuron projection"/>
    <property type="evidence" value="ECO:0000314"/>
    <property type="project" value="MGI"/>
</dbReference>
<dbReference type="GO" id="GO:0005730">
    <property type="term" value="C:nucleolus"/>
    <property type="evidence" value="ECO:0007669"/>
    <property type="project" value="Ensembl"/>
</dbReference>
<dbReference type="GO" id="GO:0005634">
    <property type="term" value="C:nucleus"/>
    <property type="evidence" value="ECO:0000314"/>
    <property type="project" value="MGI"/>
</dbReference>
<dbReference type="GO" id="GO:0048471">
    <property type="term" value="C:perinuclear region of cytoplasm"/>
    <property type="evidence" value="ECO:0007669"/>
    <property type="project" value="Ensembl"/>
</dbReference>
<dbReference type="GO" id="GO:0001726">
    <property type="term" value="C:ruffle"/>
    <property type="evidence" value="ECO:0000314"/>
    <property type="project" value="MGI"/>
</dbReference>
<dbReference type="GO" id="GO:0003779">
    <property type="term" value="F:actin binding"/>
    <property type="evidence" value="ECO:0007669"/>
    <property type="project" value="InterPro"/>
</dbReference>
<dbReference type="GO" id="GO:0030036">
    <property type="term" value="P:actin cytoskeleton organization"/>
    <property type="evidence" value="ECO:0007669"/>
    <property type="project" value="Ensembl"/>
</dbReference>
<dbReference type="GO" id="GO:0007420">
    <property type="term" value="P:brain development"/>
    <property type="evidence" value="ECO:0000315"/>
    <property type="project" value="MGI"/>
</dbReference>
<dbReference type="GO" id="GO:0045216">
    <property type="term" value="P:cell-cell junction organization"/>
    <property type="evidence" value="ECO:0000315"/>
    <property type="project" value="MGI"/>
</dbReference>
<dbReference type="GO" id="GO:0007398">
    <property type="term" value="P:ectoderm development"/>
    <property type="evidence" value="ECO:0000315"/>
    <property type="project" value="MGI"/>
</dbReference>
<dbReference type="GO" id="GO:0021766">
    <property type="term" value="P:hippocampus development"/>
    <property type="evidence" value="ECO:0000315"/>
    <property type="project" value="MGI"/>
</dbReference>
<dbReference type="GO" id="GO:0070306">
    <property type="term" value="P:lens fiber cell differentiation"/>
    <property type="evidence" value="ECO:0000315"/>
    <property type="project" value="UniProtKB"/>
</dbReference>
<dbReference type="GO" id="GO:0000165">
    <property type="term" value="P:MAPK cascade"/>
    <property type="evidence" value="ECO:0000315"/>
    <property type="project" value="MGI"/>
</dbReference>
<dbReference type="GO" id="GO:0001707">
    <property type="term" value="P:mesoderm formation"/>
    <property type="evidence" value="ECO:0000315"/>
    <property type="project" value="MGI"/>
</dbReference>
<dbReference type="GO" id="GO:0008285">
    <property type="term" value="P:negative regulation of cell population proliferation"/>
    <property type="evidence" value="ECO:0000315"/>
    <property type="project" value="MGI"/>
</dbReference>
<dbReference type="GO" id="GO:0022408">
    <property type="term" value="P:negative regulation of cell-cell adhesion"/>
    <property type="evidence" value="ECO:0007669"/>
    <property type="project" value="Ensembl"/>
</dbReference>
<dbReference type="GO" id="GO:0043409">
    <property type="term" value="P:negative regulation of MAPK cascade"/>
    <property type="evidence" value="ECO:0000315"/>
    <property type="project" value="MGI"/>
</dbReference>
<dbReference type="GO" id="GO:0033689">
    <property type="term" value="P:negative regulation of osteoblast proliferation"/>
    <property type="evidence" value="ECO:0000315"/>
    <property type="project" value="MGI"/>
</dbReference>
<dbReference type="GO" id="GO:0046426">
    <property type="term" value="P:negative regulation of receptor signaling pathway via JAK-STAT"/>
    <property type="evidence" value="ECO:0007669"/>
    <property type="project" value="Ensembl"/>
</dbReference>
<dbReference type="GO" id="GO:0010626">
    <property type="term" value="P:negative regulation of Schwann cell proliferation"/>
    <property type="evidence" value="ECO:0000315"/>
    <property type="project" value="MGI"/>
</dbReference>
<dbReference type="GO" id="GO:0042475">
    <property type="term" value="P:odontogenesis of dentin-containing tooth"/>
    <property type="evidence" value="ECO:0000315"/>
    <property type="project" value="MGI"/>
</dbReference>
<dbReference type="GO" id="GO:0033687">
    <property type="term" value="P:osteoblast proliferation"/>
    <property type="evidence" value="ECO:0000315"/>
    <property type="project" value="MGI"/>
</dbReference>
<dbReference type="GO" id="GO:0045597">
    <property type="term" value="P:positive regulation of cell differentiation"/>
    <property type="evidence" value="ECO:0000315"/>
    <property type="project" value="MGI"/>
</dbReference>
<dbReference type="GO" id="GO:0051496">
    <property type="term" value="P:positive regulation of stress fiber assembly"/>
    <property type="evidence" value="ECO:0007669"/>
    <property type="project" value="Ensembl"/>
</dbReference>
<dbReference type="GO" id="GO:0042981">
    <property type="term" value="P:regulation of apoptotic process"/>
    <property type="evidence" value="ECO:0000250"/>
    <property type="project" value="UniProtKB"/>
</dbReference>
<dbReference type="GO" id="GO:0051726">
    <property type="term" value="P:regulation of cell cycle"/>
    <property type="evidence" value="ECO:0000250"/>
    <property type="project" value="UniProtKB"/>
</dbReference>
<dbReference type="GO" id="GO:0042127">
    <property type="term" value="P:regulation of cell population proliferation"/>
    <property type="evidence" value="ECO:0000315"/>
    <property type="project" value="MGI"/>
</dbReference>
<dbReference type="GO" id="GO:0014013">
    <property type="term" value="P:regulation of gliogenesis"/>
    <property type="evidence" value="ECO:0000315"/>
    <property type="project" value="MGI"/>
</dbReference>
<dbReference type="GO" id="GO:0035330">
    <property type="term" value="P:regulation of hippo signaling"/>
    <property type="evidence" value="ECO:0007669"/>
    <property type="project" value="Ensembl"/>
</dbReference>
<dbReference type="GO" id="GO:2000177">
    <property type="term" value="P:regulation of neural precursor cell proliferation"/>
    <property type="evidence" value="ECO:0000315"/>
    <property type="project" value="MGI"/>
</dbReference>
<dbReference type="GO" id="GO:0050767">
    <property type="term" value="P:regulation of neurogenesis"/>
    <property type="evidence" value="ECO:0000315"/>
    <property type="project" value="MGI"/>
</dbReference>
<dbReference type="GO" id="GO:1900180">
    <property type="term" value="P:regulation of protein localization to nucleus"/>
    <property type="evidence" value="ECO:0000315"/>
    <property type="project" value="MGI"/>
</dbReference>
<dbReference type="GO" id="GO:0031647">
    <property type="term" value="P:regulation of protein stability"/>
    <property type="evidence" value="ECO:0000315"/>
    <property type="project" value="MGI"/>
</dbReference>
<dbReference type="GO" id="GO:0072091">
    <property type="term" value="P:regulation of stem cell proliferation"/>
    <property type="evidence" value="ECO:0000315"/>
    <property type="project" value="MGI"/>
</dbReference>
<dbReference type="GO" id="GO:0014010">
    <property type="term" value="P:Schwann cell proliferation"/>
    <property type="evidence" value="ECO:0000315"/>
    <property type="project" value="MGI"/>
</dbReference>
<dbReference type="CDD" id="cd14473">
    <property type="entry name" value="FERM_B-lobe"/>
    <property type="match status" value="1"/>
</dbReference>
<dbReference type="CDD" id="cd13194">
    <property type="entry name" value="FERM_C_ERM"/>
    <property type="match status" value="1"/>
</dbReference>
<dbReference type="CDD" id="cd17186">
    <property type="entry name" value="FERM_F1_Merlin"/>
    <property type="match status" value="1"/>
</dbReference>
<dbReference type="FunFam" id="3.10.20.90:FF:000103">
    <property type="entry name" value="Merlin isoform 2"/>
    <property type="match status" value="1"/>
</dbReference>
<dbReference type="FunFam" id="2.30.29.30:FF:000003">
    <property type="entry name" value="Radixin isoform 1"/>
    <property type="match status" value="1"/>
</dbReference>
<dbReference type="FunFam" id="1.20.80.10:FF:000002">
    <property type="entry name" value="radixin isoform X1"/>
    <property type="match status" value="1"/>
</dbReference>
<dbReference type="FunFam" id="1.20.5.450:FF:000001">
    <property type="entry name" value="radixin isoform X2"/>
    <property type="match status" value="1"/>
</dbReference>
<dbReference type="Gene3D" id="1.20.5.450">
    <property type="match status" value="1"/>
</dbReference>
<dbReference type="Gene3D" id="1.20.80.10">
    <property type="match status" value="1"/>
</dbReference>
<dbReference type="Gene3D" id="6.10.360.10">
    <property type="match status" value="1"/>
</dbReference>
<dbReference type="Gene3D" id="3.10.20.90">
    <property type="entry name" value="Phosphatidylinositol 3-kinase Catalytic Subunit, Chain A, domain 1"/>
    <property type="match status" value="1"/>
</dbReference>
<dbReference type="Gene3D" id="2.30.29.30">
    <property type="entry name" value="Pleckstrin-homology domain (PH domain)/Phosphotyrosine-binding domain (PTB)"/>
    <property type="match status" value="1"/>
</dbReference>
<dbReference type="IDEAL" id="IID50318"/>
<dbReference type="InterPro" id="IPR019749">
    <property type="entry name" value="Band_41_domain"/>
</dbReference>
<dbReference type="InterPro" id="IPR011174">
    <property type="entry name" value="ERM"/>
</dbReference>
<dbReference type="InterPro" id="IPR011259">
    <property type="entry name" value="ERM_C_dom"/>
</dbReference>
<dbReference type="InterPro" id="IPR041789">
    <property type="entry name" value="ERM_FERM_C"/>
</dbReference>
<dbReference type="InterPro" id="IPR046810">
    <property type="entry name" value="ERM_helical"/>
</dbReference>
<dbReference type="InterPro" id="IPR000798">
    <property type="entry name" value="Ez/rad/moesin-like"/>
</dbReference>
<dbReference type="InterPro" id="IPR014352">
    <property type="entry name" value="FERM/acyl-CoA-bd_prot_sf"/>
</dbReference>
<dbReference type="InterPro" id="IPR035963">
    <property type="entry name" value="FERM_2"/>
</dbReference>
<dbReference type="InterPro" id="IPR019748">
    <property type="entry name" value="FERM_central"/>
</dbReference>
<dbReference type="InterPro" id="IPR019747">
    <property type="entry name" value="FERM_CS"/>
</dbReference>
<dbReference type="InterPro" id="IPR000299">
    <property type="entry name" value="FERM_domain"/>
</dbReference>
<dbReference type="InterPro" id="IPR018979">
    <property type="entry name" value="FERM_N"/>
</dbReference>
<dbReference type="InterPro" id="IPR018980">
    <property type="entry name" value="FERM_PH-like_C"/>
</dbReference>
<dbReference type="InterPro" id="IPR008954">
    <property type="entry name" value="Moesin_tail_sf"/>
</dbReference>
<dbReference type="InterPro" id="IPR011993">
    <property type="entry name" value="PH-like_dom_sf"/>
</dbReference>
<dbReference type="InterPro" id="IPR029071">
    <property type="entry name" value="Ubiquitin-like_domsf"/>
</dbReference>
<dbReference type="PANTHER" id="PTHR23281">
    <property type="entry name" value="MERLIN/MOESIN/EZRIN/RADIXIN"/>
    <property type="match status" value="1"/>
</dbReference>
<dbReference type="Pfam" id="PF00769">
    <property type="entry name" value="ERM_C"/>
    <property type="match status" value="1"/>
</dbReference>
<dbReference type="Pfam" id="PF20492">
    <property type="entry name" value="ERM_helical"/>
    <property type="match status" value="1"/>
</dbReference>
<dbReference type="Pfam" id="PF09380">
    <property type="entry name" value="FERM_C"/>
    <property type="match status" value="1"/>
</dbReference>
<dbReference type="Pfam" id="PF00373">
    <property type="entry name" value="FERM_M"/>
    <property type="match status" value="1"/>
</dbReference>
<dbReference type="Pfam" id="PF09379">
    <property type="entry name" value="FERM_N"/>
    <property type="match status" value="1"/>
</dbReference>
<dbReference type="PIRSF" id="PIRSF002305">
    <property type="entry name" value="ERM"/>
    <property type="match status" value="1"/>
</dbReference>
<dbReference type="PRINTS" id="PR00935">
    <property type="entry name" value="BAND41"/>
</dbReference>
<dbReference type="PRINTS" id="PR00661">
    <property type="entry name" value="ERMFAMILY"/>
</dbReference>
<dbReference type="SMART" id="SM00295">
    <property type="entry name" value="B41"/>
    <property type="match status" value="1"/>
</dbReference>
<dbReference type="SMART" id="SM01196">
    <property type="entry name" value="FERM_C"/>
    <property type="match status" value="1"/>
</dbReference>
<dbReference type="SUPFAM" id="SSF48678">
    <property type="entry name" value="Moesin tail domain"/>
    <property type="match status" value="1"/>
</dbReference>
<dbReference type="SUPFAM" id="SSF50729">
    <property type="entry name" value="PH domain-like"/>
    <property type="match status" value="1"/>
</dbReference>
<dbReference type="SUPFAM" id="SSF47031">
    <property type="entry name" value="Second domain of FERM"/>
    <property type="match status" value="1"/>
</dbReference>
<dbReference type="SUPFAM" id="SSF54236">
    <property type="entry name" value="Ubiquitin-like"/>
    <property type="match status" value="1"/>
</dbReference>
<dbReference type="PROSITE" id="PS00660">
    <property type="entry name" value="FERM_1"/>
    <property type="match status" value="1"/>
</dbReference>
<dbReference type="PROSITE" id="PS00661">
    <property type="entry name" value="FERM_2"/>
    <property type="match status" value="1"/>
</dbReference>
<dbReference type="PROSITE" id="PS50057">
    <property type="entry name" value="FERM_3"/>
    <property type="match status" value="1"/>
</dbReference>
<reference key="1">
    <citation type="journal article" date="1994" name="Hum. Mol. Genet.">
        <title>The murine NF2 homologue encodes a highly conserved merlin protein with alternative forms.</title>
        <authorList>
            <person name="Haase V.H."/>
            <person name="Trofatter J.A."/>
            <person name="Maccollin M."/>
            <person name="Tarttelin E."/>
            <person name="Gusella J.F."/>
            <person name="Ramesh V."/>
        </authorList>
    </citation>
    <scope>NUCLEOTIDE SEQUENCE [MRNA]</scope>
</reference>
<reference key="2">
    <citation type="journal article" date="1994" name="Hum. Mol. Genet.">
        <title>Alternative transcripts in the mouse neurofibromatosis type 2 (NF2) gene are conserved and code for schwannomins with distinct C-terminal domains.</title>
        <authorList>
            <person name="Huynh D.P."/>
            <person name="Nechiporuk T."/>
            <person name="Pulst S.M."/>
        </authorList>
    </citation>
    <scope>NUCLEOTIDE SEQUENCE [MRNA]</scope>
    <source>
        <tissue>Brain</tissue>
    </source>
</reference>
<reference key="3">
    <citation type="journal article" date="2005" name="Science">
        <title>The transcriptional landscape of the mammalian genome.</title>
        <authorList>
            <person name="Carninci P."/>
            <person name="Kasukawa T."/>
            <person name="Katayama S."/>
            <person name="Gough J."/>
            <person name="Frith M.C."/>
            <person name="Maeda N."/>
            <person name="Oyama R."/>
            <person name="Ravasi T."/>
            <person name="Lenhard B."/>
            <person name="Wells C."/>
            <person name="Kodzius R."/>
            <person name="Shimokawa K."/>
            <person name="Bajic V.B."/>
            <person name="Brenner S.E."/>
            <person name="Batalov S."/>
            <person name="Forrest A.R."/>
            <person name="Zavolan M."/>
            <person name="Davis M.J."/>
            <person name="Wilming L.G."/>
            <person name="Aidinis V."/>
            <person name="Allen J.E."/>
            <person name="Ambesi-Impiombato A."/>
            <person name="Apweiler R."/>
            <person name="Aturaliya R.N."/>
            <person name="Bailey T.L."/>
            <person name="Bansal M."/>
            <person name="Baxter L."/>
            <person name="Beisel K.W."/>
            <person name="Bersano T."/>
            <person name="Bono H."/>
            <person name="Chalk A.M."/>
            <person name="Chiu K.P."/>
            <person name="Choudhary V."/>
            <person name="Christoffels A."/>
            <person name="Clutterbuck D.R."/>
            <person name="Crowe M.L."/>
            <person name="Dalla E."/>
            <person name="Dalrymple B.P."/>
            <person name="de Bono B."/>
            <person name="Della Gatta G."/>
            <person name="di Bernardo D."/>
            <person name="Down T."/>
            <person name="Engstrom P."/>
            <person name="Fagiolini M."/>
            <person name="Faulkner G."/>
            <person name="Fletcher C.F."/>
            <person name="Fukushima T."/>
            <person name="Furuno M."/>
            <person name="Futaki S."/>
            <person name="Gariboldi M."/>
            <person name="Georgii-Hemming P."/>
            <person name="Gingeras T.R."/>
            <person name="Gojobori T."/>
            <person name="Green R.E."/>
            <person name="Gustincich S."/>
            <person name="Harbers M."/>
            <person name="Hayashi Y."/>
            <person name="Hensch T.K."/>
            <person name="Hirokawa N."/>
            <person name="Hill D."/>
            <person name="Huminiecki L."/>
            <person name="Iacono M."/>
            <person name="Ikeo K."/>
            <person name="Iwama A."/>
            <person name="Ishikawa T."/>
            <person name="Jakt M."/>
            <person name="Kanapin A."/>
            <person name="Katoh M."/>
            <person name="Kawasawa Y."/>
            <person name="Kelso J."/>
            <person name="Kitamura H."/>
            <person name="Kitano H."/>
            <person name="Kollias G."/>
            <person name="Krishnan S.P."/>
            <person name="Kruger A."/>
            <person name="Kummerfeld S.K."/>
            <person name="Kurochkin I.V."/>
            <person name="Lareau L.F."/>
            <person name="Lazarevic D."/>
            <person name="Lipovich L."/>
            <person name="Liu J."/>
            <person name="Liuni S."/>
            <person name="McWilliam S."/>
            <person name="Madan Babu M."/>
            <person name="Madera M."/>
            <person name="Marchionni L."/>
            <person name="Matsuda H."/>
            <person name="Matsuzawa S."/>
            <person name="Miki H."/>
            <person name="Mignone F."/>
            <person name="Miyake S."/>
            <person name="Morris K."/>
            <person name="Mottagui-Tabar S."/>
            <person name="Mulder N."/>
            <person name="Nakano N."/>
            <person name="Nakauchi H."/>
            <person name="Ng P."/>
            <person name="Nilsson R."/>
            <person name="Nishiguchi S."/>
            <person name="Nishikawa S."/>
            <person name="Nori F."/>
            <person name="Ohara O."/>
            <person name="Okazaki Y."/>
            <person name="Orlando V."/>
            <person name="Pang K.C."/>
            <person name="Pavan W.J."/>
            <person name="Pavesi G."/>
            <person name="Pesole G."/>
            <person name="Petrovsky N."/>
            <person name="Piazza S."/>
            <person name="Reed J."/>
            <person name="Reid J.F."/>
            <person name="Ring B.Z."/>
            <person name="Ringwald M."/>
            <person name="Rost B."/>
            <person name="Ruan Y."/>
            <person name="Salzberg S.L."/>
            <person name="Sandelin A."/>
            <person name="Schneider C."/>
            <person name="Schoenbach C."/>
            <person name="Sekiguchi K."/>
            <person name="Semple C.A."/>
            <person name="Seno S."/>
            <person name="Sessa L."/>
            <person name="Sheng Y."/>
            <person name="Shibata Y."/>
            <person name="Shimada H."/>
            <person name="Shimada K."/>
            <person name="Silva D."/>
            <person name="Sinclair B."/>
            <person name="Sperling S."/>
            <person name="Stupka E."/>
            <person name="Sugiura K."/>
            <person name="Sultana R."/>
            <person name="Takenaka Y."/>
            <person name="Taki K."/>
            <person name="Tammoja K."/>
            <person name="Tan S.L."/>
            <person name="Tang S."/>
            <person name="Taylor M.S."/>
            <person name="Tegner J."/>
            <person name="Teichmann S.A."/>
            <person name="Ueda H.R."/>
            <person name="van Nimwegen E."/>
            <person name="Verardo R."/>
            <person name="Wei C.L."/>
            <person name="Yagi K."/>
            <person name="Yamanishi H."/>
            <person name="Zabarovsky E."/>
            <person name="Zhu S."/>
            <person name="Zimmer A."/>
            <person name="Hide W."/>
            <person name="Bult C."/>
            <person name="Grimmond S.M."/>
            <person name="Teasdale R.D."/>
            <person name="Liu E.T."/>
            <person name="Brusic V."/>
            <person name="Quackenbush J."/>
            <person name="Wahlestedt C."/>
            <person name="Mattick J.S."/>
            <person name="Hume D.A."/>
            <person name="Kai C."/>
            <person name="Sasaki D."/>
            <person name="Tomaru Y."/>
            <person name="Fukuda S."/>
            <person name="Kanamori-Katayama M."/>
            <person name="Suzuki M."/>
            <person name="Aoki J."/>
            <person name="Arakawa T."/>
            <person name="Iida J."/>
            <person name="Imamura K."/>
            <person name="Itoh M."/>
            <person name="Kato T."/>
            <person name="Kawaji H."/>
            <person name="Kawagashira N."/>
            <person name="Kawashima T."/>
            <person name="Kojima M."/>
            <person name="Kondo S."/>
            <person name="Konno H."/>
            <person name="Nakano K."/>
            <person name="Ninomiya N."/>
            <person name="Nishio T."/>
            <person name="Okada M."/>
            <person name="Plessy C."/>
            <person name="Shibata K."/>
            <person name="Shiraki T."/>
            <person name="Suzuki S."/>
            <person name="Tagami M."/>
            <person name="Waki K."/>
            <person name="Watahiki A."/>
            <person name="Okamura-Oho Y."/>
            <person name="Suzuki H."/>
            <person name="Kawai J."/>
            <person name="Hayashizaki Y."/>
        </authorList>
    </citation>
    <scope>NUCLEOTIDE SEQUENCE [LARGE SCALE MRNA] (ISOFORM 2)</scope>
    <source>
        <strain>C57BL/6J</strain>
        <tissue>Brain</tissue>
    </source>
</reference>
<reference key="4">
    <citation type="journal article" date="1994" name="Genomics">
        <title>The mouse neurofibromatosis type 2 gene maps to chromosome 11.</title>
        <authorList>
            <person name="Claudio J.O."/>
            <person name="Marineau C."/>
            <person name="Rouleau G.A."/>
        </authorList>
    </citation>
    <scope>NUCLEOTIDE SEQUENCE [MRNA] OF 400-596</scope>
    <source>
        <tissue>Brain</tissue>
    </source>
</reference>
<reference key="5">
    <citation type="journal article" date="2005" name="Exp. Cell Res.">
        <title>Layilin, a cell surface hyaluronan receptor, interacts with merlin and radixin.</title>
        <authorList>
            <person name="Bono P."/>
            <person name="Cordero E."/>
            <person name="Johnson K."/>
            <person name="Borowsky M."/>
            <person name="Ramesh V."/>
            <person name="Jacks T."/>
            <person name="Hynes R.O."/>
        </authorList>
    </citation>
    <scope>INTERACTION WITH LAYN</scope>
</reference>
<reference key="6">
    <citation type="journal article" date="2010" name="Cell">
        <title>A tissue-specific atlas of mouse protein phosphorylation and expression.</title>
        <authorList>
            <person name="Huttlin E.L."/>
            <person name="Jedrychowski M.P."/>
            <person name="Elias J.E."/>
            <person name="Goswami T."/>
            <person name="Rad R."/>
            <person name="Beausoleil S.A."/>
            <person name="Villen J."/>
            <person name="Haas W."/>
            <person name="Sowa M.E."/>
            <person name="Gygi S.P."/>
        </authorList>
    </citation>
    <scope>IDENTIFICATION BY MASS SPECTROMETRY [LARGE SCALE ANALYSIS]</scope>
    <source>
        <tissue>Brown adipose tissue</tissue>
    </source>
</reference>
<reference key="7">
    <citation type="journal article" date="2010" name="Invest. Ophthalmol. Vis. Sci.">
        <title>The tumor suppressor merlin is required for cell cycle exit, terminal differentiation, and cell polarity in the developing murine lens.</title>
        <authorList>
            <person name="Wiley L.A."/>
            <person name="Dattilo L.K."/>
            <person name="Kang K.B."/>
            <person name="Giovannini M."/>
            <person name="Beebe D.C."/>
        </authorList>
    </citation>
    <scope>FUNCTION</scope>
    <scope>DISRUPTION PHENOTYPE</scope>
</reference>
<evidence type="ECO:0000250" key="1"/>
<evidence type="ECO:0000250" key="2">
    <source>
        <dbReference type="UniProtKB" id="P35240"/>
    </source>
</evidence>
<evidence type="ECO:0000255" key="3">
    <source>
        <dbReference type="PROSITE-ProRule" id="PRU00084"/>
    </source>
</evidence>
<evidence type="ECO:0000256" key="4">
    <source>
        <dbReference type="SAM" id="MobiDB-lite"/>
    </source>
</evidence>
<evidence type="ECO:0000269" key="5">
    <source>
    </source>
</evidence>
<evidence type="ECO:0000269" key="6">
    <source>
    </source>
</evidence>
<evidence type="ECO:0000303" key="7">
    <source>
    </source>
</evidence>
<evidence type="ECO:0000305" key="8"/>
<evidence type="ECO:0007829" key="9">
    <source>
        <dbReference type="PDB" id="1ISN"/>
    </source>
</evidence>
<evidence type="ECO:0007829" key="10">
    <source>
        <dbReference type="PDB" id="3WA0"/>
    </source>
</evidence>
<evidence type="ECO:0007829" key="11">
    <source>
        <dbReference type="PDB" id="4ZRK"/>
    </source>
</evidence>
<sequence>MAGAIASRMSFSSLKRKQPKTFTVRIVTMDAEMEFNCEMKWKGKDLFDLVCRTLGLRETWFFGLQYTIKDTVAWLKMDKKVLDHDVSKEEPVTFHFLAKFYPENAEEELVQEITQHLFFLQVKKQILDEKVYCPPEASVLLASYAVQAKYGDYDPSVHKRGFLAQEELLPKRVINLYQMTPEMWEERITAWYAEHRGRARDEAEMEYLKIAQDLEMYGVNYFTIRNKKGTELLLGVDALGLHIYDPENRLTPKISFPWNEIRNISYSDKEFTIKPLDKKIDVFKFNSSKLRVNKLILQLCIGNHDLFMRRRKADSLEVQQMKAQAREEKARKQMERQRLAREKQMREEAERTRDELERRLLQMKEEATMANEALMRSEETADLLAEKAQITEEEAKLLAQKAAEAEQEMQRIKATAIRTEEEKRLMEQKVLEAEVLALKMAEESERRAKEADQLKQDLQEAREAERRAKQKLLEIATKPTYPPMNPIPPPLPPDIPSFDIIADSLSFDFKDTDMKRLSMEIEKEKVEYMEKSKHLQEQLNELKTEIEALKLKERETALDVLHSESSDRGGPSSKHNTIKKLTLQSAKSRVAFFEEL</sequence>
<protein>
    <recommendedName>
        <fullName>Merlin</fullName>
    </recommendedName>
    <alternativeName>
        <fullName>Moesin-ezrin-radixin-like protein</fullName>
    </alternativeName>
    <alternativeName>
        <fullName>Neurofibromin-2</fullName>
    </alternativeName>
    <alternativeName>
        <fullName>Schwannomin</fullName>
    </alternativeName>
</protein>
<proteinExistence type="evidence at protein level"/>